<gene>
    <name evidence="1" type="primary">ndhD2</name>
    <name type="ordered locus">Synpcc7942_1976</name>
</gene>
<feature type="chain" id="PRO_0000343259" description="NAD(P)H-quinone oxidoreductase chain 4 2">
    <location>
        <begin position="1"/>
        <end position="534"/>
    </location>
</feature>
<feature type="transmembrane region" description="Helical" evidence="1">
    <location>
        <begin position="6"/>
        <end position="26"/>
    </location>
</feature>
<feature type="transmembrane region" description="Helical" evidence="1">
    <location>
        <begin position="38"/>
        <end position="58"/>
    </location>
</feature>
<feature type="transmembrane region" description="Helical" evidence="1">
    <location>
        <begin position="93"/>
        <end position="113"/>
    </location>
</feature>
<feature type="transmembrane region" description="Helical" evidence="1">
    <location>
        <begin position="117"/>
        <end position="137"/>
    </location>
</feature>
<feature type="transmembrane region" description="Helical" evidence="1">
    <location>
        <begin position="138"/>
        <end position="158"/>
    </location>
</feature>
<feature type="transmembrane region" description="Helical" evidence="1">
    <location>
        <begin position="171"/>
        <end position="191"/>
    </location>
</feature>
<feature type="transmembrane region" description="Helical" evidence="1">
    <location>
        <begin position="210"/>
        <end position="230"/>
    </location>
</feature>
<feature type="transmembrane region" description="Helical" evidence="1">
    <location>
        <begin position="245"/>
        <end position="265"/>
    </location>
</feature>
<feature type="transmembrane region" description="Helical" evidence="1">
    <location>
        <begin position="279"/>
        <end position="299"/>
    </location>
</feature>
<feature type="transmembrane region" description="Helical" evidence="1">
    <location>
        <begin position="313"/>
        <end position="333"/>
    </location>
</feature>
<feature type="transmembrane region" description="Helical" evidence="1">
    <location>
        <begin position="335"/>
        <end position="355"/>
    </location>
</feature>
<feature type="transmembrane region" description="Helical" evidence="1">
    <location>
        <begin position="377"/>
        <end position="399"/>
    </location>
</feature>
<feature type="transmembrane region" description="Helical" evidence="1">
    <location>
        <begin position="419"/>
        <end position="439"/>
    </location>
</feature>
<accession>Q31LR3</accession>
<protein>
    <recommendedName>
        <fullName evidence="1">NAD(P)H-quinone oxidoreductase chain 4 2</fullName>
        <ecNumber evidence="1">7.1.1.-</ecNumber>
    </recommendedName>
    <alternativeName>
        <fullName evidence="1">NAD(P)H dehydrogenase I, chain 4 2</fullName>
    </alternativeName>
    <alternativeName>
        <fullName evidence="1">NDH-1, chain 4 2</fullName>
    </alternativeName>
</protein>
<dbReference type="EC" id="7.1.1.-" evidence="1"/>
<dbReference type="EMBL" id="CP000100">
    <property type="protein sequence ID" value="ABB58006.1"/>
    <property type="molecule type" value="Genomic_DNA"/>
</dbReference>
<dbReference type="SMR" id="Q31LR3"/>
<dbReference type="STRING" id="1140.Synpcc7942_1976"/>
<dbReference type="PaxDb" id="1140-Synpcc7942_1976"/>
<dbReference type="KEGG" id="syf:Synpcc7942_1976"/>
<dbReference type="eggNOG" id="COG1008">
    <property type="taxonomic scope" value="Bacteria"/>
</dbReference>
<dbReference type="HOGENOM" id="CLU_007100_4_0_3"/>
<dbReference type="OrthoDB" id="9811718at2"/>
<dbReference type="BioCyc" id="MetaCyc:SYNPCC7942_1976-MONOMER"/>
<dbReference type="BioCyc" id="SYNEL:SYNPCC7942_1976-MONOMER"/>
<dbReference type="Proteomes" id="UP000889800">
    <property type="component" value="Chromosome"/>
</dbReference>
<dbReference type="GO" id="GO:0031676">
    <property type="term" value="C:plasma membrane-derived thylakoid membrane"/>
    <property type="evidence" value="ECO:0007669"/>
    <property type="project" value="UniProtKB-SubCell"/>
</dbReference>
<dbReference type="GO" id="GO:0008137">
    <property type="term" value="F:NADH dehydrogenase (ubiquinone) activity"/>
    <property type="evidence" value="ECO:0007669"/>
    <property type="project" value="InterPro"/>
</dbReference>
<dbReference type="GO" id="GO:0048039">
    <property type="term" value="F:ubiquinone binding"/>
    <property type="evidence" value="ECO:0007669"/>
    <property type="project" value="TreeGrafter"/>
</dbReference>
<dbReference type="GO" id="GO:0042773">
    <property type="term" value="P:ATP synthesis coupled electron transport"/>
    <property type="evidence" value="ECO:0007669"/>
    <property type="project" value="InterPro"/>
</dbReference>
<dbReference type="GO" id="GO:0015990">
    <property type="term" value="P:electron transport coupled proton transport"/>
    <property type="evidence" value="ECO:0007669"/>
    <property type="project" value="TreeGrafter"/>
</dbReference>
<dbReference type="HAMAP" id="MF_00491">
    <property type="entry name" value="NDH1_NuoM"/>
    <property type="match status" value="1"/>
</dbReference>
<dbReference type="InterPro" id="IPR022997">
    <property type="entry name" value="NADH_Q_OxRdtase_chain4"/>
</dbReference>
<dbReference type="InterPro" id="IPR010227">
    <property type="entry name" value="NADH_Q_OxRdtase_chainM/4"/>
</dbReference>
<dbReference type="InterPro" id="IPR003918">
    <property type="entry name" value="NADH_UbQ_OxRdtase"/>
</dbReference>
<dbReference type="InterPro" id="IPR001750">
    <property type="entry name" value="ND/Mrp_TM"/>
</dbReference>
<dbReference type="NCBIfam" id="TIGR01972">
    <property type="entry name" value="NDH_I_M"/>
    <property type="match status" value="1"/>
</dbReference>
<dbReference type="NCBIfam" id="NF002713">
    <property type="entry name" value="PRK02546.1"/>
    <property type="match status" value="1"/>
</dbReference>
<dbReference type="NCBIfam" id="NF009212">
    <property type="entry name" value="PRK12561.1"/>
    <property type="match status" value="1"/>
</dbReference>
<dbReference type="PANTHER" id="PTHR43507:SF21">
    <property type="entry name" value="NAD(P)H-QUINONE OXIDOREDUCTASE CHAIN 4, CHLOROPLASTIC"/>
    <property type="match status" value="1"/>
</dbReference>
<dbReference type="PANTHER" id="PTHR43507">
    <property type="entry name" value="NADH-UBIQUINONE OXIDOREDUCTASE CHAIN 4"/>
    <property type="match status" value="1"/>
</dbReference>
<dbReference type="Pfam" id="PF00361">
    <property type="entry name" value="Proton_antipo_M"/>
    <property type="match status" value="1"/>
</dbReference>
<dbReference type="PRINTS" id="PR01437">
    <property type="entry name" value="NUOXDRDTASE4"/>
</dbReference>
<organism>
    <name type="scientific">Synechococcus elongatus (strain ATCC 33912 / PCC 7942 / FACHB-805)</name>
    <name type="common">Anacystis nidulans R2</name>
    <dbReference type="NCBI Taxonomy" id="1140"/>
    <lineage>
        <taxon>Bacteria</taxon>
        <taxon>Bacillati</taxon>
        <taxon>Cyanobacteriota</taxon>
        <taxon>Cyanophyceae</taxon>
        <taxon>Synechococcales</taxon>
        <taxon>Synechococcaceae</taxon>
        <taxon>Synechococcus</taxon>
    </lineage>
</organism>
<evidence type="ECO:0000255" key="1">
    <source>
        <dbReference type="HAMAP-Rule" id="MF_00491"/>
    </source>
</evidence>
<reference key="1">
    <citation type="submission" date="2005-08" db="EMBL/GenBank/DDBJ databases">
        <title>Complete sequence of chromosome 1 of Synechococcus elongatus PCC 7942.</title>
        <authorList>
            <consortium name="US DOE Joint Genome Institute"/>
            <person name="Copeland A."/>
            <person name="Lucas S."/>
            <person name="Lapidus A."/>
            <person name="Barry K."/>
            <person name="Detter J.C."/>
            <person name="Glavina T."/>
            <person name="Hammon N."/>
            <person name="Israni S."/>
            <person name="Pitluck S."/>
            <person name="Schmutz J."/>
            <person name="Larimer F."/>
            <person name="Land M."/>
            <person name="Kyrpides N."/>
            <person name="Lykidis A."/>
            <person name="Golden S."/>
            <person name="Richardson P."/>
        </authorList>
    </citation>
    <scope>NUCLEOTIDE SEQUENCE [LARGE SCALE GENOMIC DNA]</scope>
    <source>
        <strain>ATCC 33912 / PCC 7942 / FACHB-805</strain>
    </source>
</reference>
<proteinExistence type="inferred from homology"/>
<keyword id="KW-0472">Membrane</keyword>
<keyword id="KW-0520">NAD</keyword>
<keyword id="KW-0521">NADP</keyword>
<keyword id="KW-0618">Plastoquinone</keyword>
<keyword id="KW-0874">Quinone</keyword>
<keyword id="KW-1185">Reference proteome</keyword>
<keyword id="KW-0793">Thylakoid</keyword>
<keyword id="KW-1278">Translocase</keyword>
<keyword id="KW-0812">Transmembrane</keyword>
<keyword id="KW-1133">Transmembrane helix</keyword>
<name>NU4C2_SYNE7</name>
<sequence>MEIGTFPWLTTIILLPIVAALFIPLLPDRDGKGTTIRWYSLIVGLVDFILLVVAFWTSYDFSNPDLQLVESYAWVPQIGLNWSVGADGLSMPLILLTGFISTLAMLAAWPVTFKTRFFYFLMLAMYGGQILVFAVQDLLVFFFAWELELIPVYLLLAIWGGKRRQYAATKFILYTAGSSLFILVASLAMAFSGDVISFDFQTLAAKEYAIGFQLLLYAGFLIAYGVKLPIVPLHTWLPDAHGEATAPVHMLLAGILLKMGGYALFRMNAGMLPEAHARFAPILVLLGVVNILYAALTSFAQRNLKRKIAYSSISHMGFVLIGLGSFTQLGLSGSMLQMVSHGLIGASLFFLVGATYDRTHTLMLDEMGGVGQKMRKMFAMWTTCAMASLALPGMSGFVAELMVFVGFATSDAYGLPFKVVVISLAAIGVILTPIYLLSMLREIFFGPENKTLTEHETLVDAEPREVYIIACLLVPIIGIGLYPKLTTQVYDATLVQLTERLRSAVPVIAQQAEASRDRLSHFPGQAHRQAPPLG</sequence>
<comment type="function">
    <text evidence="1">NDH-1 shuttles electrons from NAD(P)H, via FMN and iron-sulfur (Fe-S) centers, to quinones in the respiratory chain. The immediate electron acceptor for the enzyme in this species is believed to be plastoquinone. Couples the redox reaction to proton translocation (for every two electrons transferred, four hydrogen ions are translocated across the cytoplasmic membrane), and thus conserves the redox energy in a proton gradient.</text>
</comment>
<comment type="catalytic activity">
    <reaction evidence="1">
        <text>a plastoquinone + NADH + (n+1) H(+)(in) = a plastoquinol + NAD(+) + n H(+)(out)</text>
        <dbReference type="Rhea" id="RHEA:42608"/>
        <dbReference type="Rhea" id="RHEA-COMP:9561"/>
        <dbReference type="Rhea" id="RHEA-COMP:9562"/>
        <dbReference type="ChEBI" id="CHEBI:15378"/>
        <dbReference type="ChEBI" id="CHEBI:17757"/>
        <dbReference type="ChEBI" id="CHEBI:57540"/>
        <dbReference type="ChEBI" id="CHEBI:57945"/>
        <dbReference type="ChEBI" id="CHEBI:62192"/>
    </reaction>
</comment>
<comment type="catalytic activity">
    <reaction evidence="1">
        <text>a plastoquinone + NADPH + (n+1) H(+)(in) = a plastoquinol + NADP(+) + n H(+)(out)</text>
        <dbReference type="Rhea" id="RHEA:42612"/>
        <dbReference type="Rhea" id="RHEA-COMP:9561"/>
        <dbReference type="Rhea" id="RHEA-COMP:9562"/>
        <dbReference type="ChEBI" id="CHEBI:15378"/>
        <dbReference type="ChEBI" id="CHEBI:17757"/>
        <dbReference type="ChEBI" id="CHEBI:57783"/>
        <dbReference type="ChEBI" id="CHEBI:58349"/>
        <dbReference type="ChEBI" id="CHEBI:62192"/>
    </reaction>
</comment>
<comment type="subcellular location">
    <subcellularLocation>
        <location evidence="1">Cellular thylakoid membrane</location>
        <topology evidence="1">Multi-pass membrane protein</topology>
    </subcellularLocation>
</comment>
<comment type="similarity">
    <text evidence="1">Belongs to the complex I subunit 4 family.</text>
</comment>